<keyword id="KW-0064">Aspartyl protease</keyword>
<keyword id="KW-0175">Coiled coil</keyword>
<keyword id="KW-1015">Disulfide bond</keyword>
<keyword id="KW-0256">Endoplasmic reticulum</keyword>
<keyword id="KW-0378">Hydrolase</keyword>
<keyword id="KW-0472">Membrane</keyword>
<keyword id="KW-0645">Protease</keyword>
<keyword id="KW-1185">Reference proteome</keyword>
<keyword id="KW-0732">Signal</keyword>
<keyword id="KW-0812">Transmembrane</keyword>
<keyword id="KW-1133">Transmembrane helix</keyword>
<gene>
    <name evidence="9" type="primary">PMV</name>
    <name evidence="11" type="ORF">PFHG_00958</name>
</gene>
<dbReference type="EC" id="3.4.23.-" evidence="2"/>
<dbReference type="EMBL" id="CH671932">
    <property type="protein sequence ID" value="KOB59201.1"/>
    <property type="molecule type" value="Genomic_DNA"/>
</dbReference>
<dbReference type="SMR" id="A0A0L7K812"/>
<dbReference type="EnsemblProtists" id="KOB59201">
    <property type="protein sequence ID" value="KOB59201"/>
    <property type="gene ID" value="PFHG_00958"/>
</dbReference>
<dbReference type="KEGG" id="pfh:PFHG_00958"/>
<dbReference type="VEuPathDB" id="PlasmoDB:PfHB3_130029900"/>
<dbReference type="OMA" id="RCNFASY"/>
<dbReference type="OrthoDB" id="1899at418107"/>
<dbReference type="Proteomes" id="UP000054289">
    <property type="component" value="Unassembled WGS sequence"/>
</dbReference>
<dbReference type="GO" id="GO:0005789">
    <property type="term" value="C:endoplasmic reticulum membrane"/>
    <property type="evidence" value="ECO:0007669"/>
    <property type="project" value="UniProtKB-SubCell"/>
</dbReference>
<dbReference type="GO" id="GO:0004190">
    <property type="term" value="F:aspartic-type endopeptidase activity"/>
    <property type="evidence" value="ECO:0007669"/>
    <property type="project" value="UniProtKB-KW"/>
</dbReference>
<dbReference type="GO" id="GO:0006508">
    <property type="term" value="P:proteolysis"/>
    <property type="evidence" value="ECO:0007669"/>
    <property type="project" value="UniProtKB-KW"/>
</dbReference>
<dbReference type="CDD" id="cd06096">
    <property type="entry name" value="Plasmepsin_5"/>
    <property type="match status" value="1"/>
</dbReference>
<dbReference type="FunFam" id="2.40.70.10:FF:000080">
    <property type="entry name" value="Plasmepsin V"/>
    <property type="match status" value="1"/>
</dbReference>
<dbReference type="Gene3D" id="2.40.70.10">
    <property type="entry name" value="Acid Proteases"/>
    <property type="match status" value="2"/>
</dbReference>
<dbReference type="InterPro" id="IPR001461">
    <property type="entry name" value="Aspartic_peptidase_A1"/>
</dbReference>
<dbReference type="InterPro" id="IPR001969">
    <property type="entry name" value="Aspartic_peptidase_AS"/>
</dbReference>
<dbReference type="InterPro" id="IPR033121">
    <property type="entry name" value="PEPTIDASE_A1"/>
</dbReference>
<dbReference type="InterPro" id="IPR021109">
    <property type="entry name" value="Peptidase_aspartic_dom_sf"/>
</dbReference>
<dbReference type="InterPro" id="IPR033866">
    <property type="entry name" value="Plasmepsin_5"/>
</dbReference>
<dbReference type="InterPro" id="IPR032861">
    <property type="entry name" value="TAXi_N"/>
</dbReference>
<dbReference type="PANTHER" id="PTHR13683">
    <property type="entry name" value="ASPARTYL PROTEASES"/>
    <property type="match status" value="1"/>
</dbReference>
<dbReference type="PANTHER" id="PTHR13683:SF375">
    <property type="entry name" value="PEPTIDASE A1 DOMAIN-CONTAINING PROTEIN"/>
    <property type="match status" value="1"/>
</dbReference>
<dbReference type="Pfam" id="PF00026">
    <property type="entry name" value="Asp"/>
    <property type="match status" value="1"/>
</dbReference>
<dbReference type="Pfam" id="PF14543">
    <property type="entry name" value="TAXi_N"/>
    <property type="match status" value="1"/>
</dbReference>
<dbReference type="PRINTS" id="PR00792">
    <property type="entry name" value="PEPSIN"/>
</dbReference>
<dbReference type="SUPFAM" id="SSF50630">
    <property type="entry name" value="Acid proteases"/>
    <property type="match status" value="1"/>
</dbReference>
<dbReference type="PROSITE" id="PS00141">
    <property type="entry name" value="ASP_PROTEASE"/>
    <property type="match status" value="2"/>
</dbReference>
<dbReference type="PROSITE" id="PS51767">
    <property type="entry name" value="PEPTIDASE_A1"/>
    <property type="match status" value="1"/>
</dbReference>
<protein>
    <recommendedName>
        <fullName evidence="9">Plasmepsin V</fullName>
        <ecNumber evidence="2">3.4.23.-</ecNumber>
    </recommendedName>
    <alternativeName>
        <fullName evidence="10">Plasmepsin 5</fullName>
    </alternativeName>
</protein>
<organism evidence="12">
    <name type="scientific">Plasmodium falciparum (isolate HB3)</name>
    <dbReference type="NCBI Taxonomy" id="137071"/>
    <lineage>
        <taxon>Eukaryota</taxon>
        <taxon>Sar</taxon>
        <taxon>Alveolata</taxon>
        <taxon>Apicomplexa</taxon>
        <taxon>Aconoidasida</taxon>
        <taxon>Haemosporida</taxon>
        <taxon>Plasmodiidae</taxon>
        <taxon>Plasmodium</taxon>
        <taxon>Plasmodium (Laverania)</taxon>
    </lineage>
</organism>
<reference evidence="12" key="1">
    <citation type="submission" date="2006-03" db="EMBL/GenBank/DDBJ databases">
        <title>Annotation of Plasmodium falciparum HB3.</title>
        <authorList>
            <consortium name="The Broad Institute Genome Sequencing Platform"/>
            <person name="Volkman S.K."/>
            <person name="Neafsey D.E."/>
            <person name="Dash A.P."/>
            <person name="Chitnis C.E."/>
            <person name="Hartl D.L."/>
            <person name="Young S.K."/>
            <person name="Zeng Q."/>
            <person name="Koehrsen M."/>
            <person name="Alvarado L."/>
            <person name="Berlin A."/>
            <person name="Borenstein D."/>
            <person name="Chapman S.B."/>
            <person name="Chen Z."/>
            <person name="Engels R."/>
            <person name="Freedman E."/>
            <person name="Gellesch M."/>
            <person name="Goldberg J."/>
            <person name="Griggs A."/>
            <person name="Gujja S."/>
            <person name="Heilman E.R."/>
            <person name="Heiman D.I."/>
            <person name="Howarth C."/>
            <person name="Jen D."/>
            <person name="Larson L."/>
            <person name="Mehta T."/>
            <person name="Neiman D."/>
            <person name="Park D."/>
            <person name="Pearson M."/>
            <person name="Roberts A."/>
            <person name="Saif S."/>
            <person name="Shea T."/>
            <person name="Shenoy N."/>
            <person name="Sisk P."/>
            <person name="Stolte C."/>
            <person name="Sykes S."/>
            <person name="Walk T."/>
            <person name="White J."/>
            <person name="Yandava C."/>
            <person name="Haas B."/>
            <person name="Henn M.R."/>
            <person name="Nusbaum C."/>
            <person name="Birren B."/>
        </authorList>
    </citation>
    <scope>NUCLEOTIDE SEQUENCE [LARGE SCALE GENOMIC DNA]</scope>
    <source>
        <strain evidence="12">HB3</strain>
    </source>
</reference>
<reference evidence="10" key="2">
    <citation type="journal article" date="2005" name="Mol. Biochem. Parasitol.">
        <title>Characterization of plasmepsin V, a membrane-bound aspartic protease homolog in the endoplasmic reticulum of Plasmodium falciparum.</title>
        <authorList>
            <person name="Klemba M."/>
            <person name="Goldberg D.E."/>
        </authorList>
    </citation>
    <scope>SUBCELLULAR LOCATION</scope>
    <scope>DEVELOPMENTAL STAGE</scope>
    <scope>LACK OF PROPEPTIDE PROCESSING</scope>
</reference>
<sequence>MNNYFLRKENFFILFCFVFVSIFFVSNVTIIKCNNVENKIDNVGKKIENVGKKIGDMENKNDNVENKNDNVENKNDNVGNKNDNVKNASSDLYKYKLYGDIDEYAYYFLDIDIGKPSQRISLILDTGSSSLSFPCNGCKDCGIHMEKPYNLNYSKTSSILYCNKSNCPYGLKCVGNKCEYLQSYCEGSQIYGFYFSDIVTLPSYNNKKKISFEKLMGCHMHEESLFLHQQATGVLGFSLTKPNGVPTFVDLLFKHTPSLKPIYSICVSEHGGELIIGGYEPDYFLSNQKEKQKMDKSDNNSSNKGNVSIKLKNNDKNDDEENNSKDVIVSNNVEDIVWQAITRKYYYYIKIYGLDLYGTNIMDKKELDMLVDSGSTFTHIPENIYNQINYYLDILCIHDMTNIYEINKRLKLTNESLNKPLVYFEDFKTALKNIIQNENLCIKIVDGVQCWKSLENLPNLYITLSNNYKMIWKPSSYLYKKESFWCKGLEKQVNNKPILGLTFFKNKQVIFDLQQNQIAFIESKCPSNLTSSRPRTFNEYREKENIFLKVSYINLYCLWLLLALTILLSLILYVRKMFYMDYFPLSDQNKSPIQEST</sequence>
<comment type="function">
    <text evidence="2 3">During the asexual blood stage, plays an essential role in the export of several proteins into the host erythrocytes by cleaving the pentameric localization motif RxLxE/Q/D (termed Plasmodium export element (PEXEL)) located downstream of the N-terminal secretory signal sequence (By similarity). Specifically, cleaves after the leucine residue in the RxLxE/Q/D (or RxLxxE) motif of exported proteins including RESA, EMP2, EMP3, KAHRP, RIF/Rifin and STEVOR (By similarity). Also, by regulating protein export, plays an essential role in gametocyte development and thus parasite transmission to the mosquito vector (By similarity).</text>
</comment>
<comment type="subunit">
    <text evidence="2">Component of a complex composed of SPC25 and PMV; the interaction is mediated via the transmembrane domains. The complex interacts with the SEC61 channel-forming translocon complex and is involved in the recognition and import of PEXEL motif-containing proteins into the ER for subsequent export.</text>
</comment>
<comment type="subcellular location">
    <subcellularLocation>
        <location evidence="8">Endoplasmic reticulum membrane</location>
        <topology evidence="2">Single-pass type I membrane protein</topology>
    </subcellularLocation>
    <text evidence="3">During gametogenesis, localizes to the perinuclear ER in stage I-II gametocytes, and relocalizes towards the cell periphery as the ER redistributes in the cell in stage III-IV gametocytes (By similarity). Partially colocalizes with SPC25 in the endoplasmic reticulum (By similarity).</text>
</comment>
<comment type="developmental stage">
    <text evidence="8">Expressed during the asexual blood stage; expression is low at the ring stage and then increases through the trophozoite and schizont stages (at protein level).</text>
</comment>
<comment type="domain">
    <text evidence="2">The transmembrane domain is essential for localization to the endoplasmic reticulum.</text>
</comment>
<comment type="PTM">
    <text evidence="2 8">It is not clear if the zymogen has a cleavable propeptide (PubMed:16024107). In vitro, appears to be cleaved between Asn-87 and Ala-88 (By similarity). Cleavage of the putative propeptide is dispensable for catalytic activity (By similarity).</text>
</comment>
<comment type="similarity">
    <text evidence="6">Belongs to the peptidase A1 family.</text>
</comment>
<comment type="caution">
    <text evidence="10">It is unclear if PMV is glycosylated as other members of the same enzyme family, ie. PMI and PMII, are not.</text>
</comment>
<accession>A0A0L7K812</accession>
<name>PLM5_PLAFX</name>
<feature type="signal peptide" evidence="10">
    <location>
        <begin position="1"/>
        <end status="unknown"/>
    </location>
</feature>
<feature type="chain" id="PRO_0000453927" description="Plasmepsin V">
    <location>
        <begin status="unknown"/>
        <end position="597"/>
    </location>
</feature>
<feature type="topological domain" description="Lumenal" evidence="2">
    <location>
        <begin position="1"/>
        <end position="551"/>
    </location>
</feature>
<feature type="transmembrane region" description="Helical" evidence="4">
    <location>
        <begin position="552"/>
        <end position="572"/>
    </location>
</feature>
<feature type="topological domain" description="Cytoplasmic" evidence="2">
    <location>
        <begin position="573"/>
        <end position="597"/>
    </location>
</feature>
<feature type="domain" description="Peptidase A1" evidence="5">
    <location>
        <begin position="107"/>
        <end position="521"/>
    </location>
</feature>
<feature type="region of interest" description="Disordered" evidence="7">
    <location>
        <begin position="58"/>
        <end position="83"/>
    </location>
</feature>
<feature type="region of interest" description="Disordered" evidence="7">
    <location>
        <begin position="289"/>
        <end position="323"/>
    </location>
</feature>
<feature type="coiled-coil region" evidence="4">
    <location>
        <begin position="33"/>
        <end position="88"/>
    </location>
</feature>
<feature type="compositionally biased region" description="Basic and acidic residues" evidence="7">
    <location>
        <begin position="58"/>
        <end position="75"/>
    </location>
</feature>
<feature type="compositionally biased region" description="Basic and acidic residues" evidence="7">
    <location>
        <begin position="289"/>
        <end position="298"/>
    </location>
</feature>
<feature type="compositionally biased region" description="Low complexity" evidence="7">
    <location>
        <begin position="299"/>
        <end position="311"/>
    </location>
</feature>
<feature type="active site" evidence="5">
    <location>
        <position position="125"/>
    </location>
</feature>
<feature type="active site" evidence="5">
    <location>
        <position position="372"/>
    </location>
</feature>
<feature type="disulfide bond" evidence="1">
    <location>
        <begin position="135"/>
        <end position="218"/>
    </location>
</feature>
<feature type="disulfide bond" evidence="1">
    <location>
        <begin position="138"/>
        <end position="141"/>
    </location>
</feature>
<feature type="disulfide bond" evidence="1">
    <location>
        <begin position="162"/>
        <end position="173"/>
    </location>
</feature>
<feature type="disulfide bond" evidence="1">
    <location>
        <begin position="167"/>
        <end position="178"/>
    </location>
</feature>
<feature type="disulfide bond" evidence="1">
    <location>
        <begin position="266"/>
        <end position="525"/>
    </location>
</feature>
<feature type="disulfide bond" evidence="1">
    <location>
        <begin position="396"/>
        <end position="441"/>
    </location>
</feature>
<feature type="disulfide bond" evidence="1">
    <location>
        <begin position="450"/>
        <end position="486"/>
    </location>
</feature>
<proteinExistence type="evidence at protein level"/>
<evidence type="ECO:0000250" key="1">
    <source>
        <dbReference type="UniProtKB" id="A5K302"/>
    </source>
</evidence>
<evidence type="ECO:0000250" key="2">
    <source>
        <dbReference type="UniProtKB" id="Q8I6Z5"/>
    </source>
</evidence>
<evidence type="ECO:0000250" key="3">
    <source>
        <dbReference type="UniProtKB" id="W7JPD9"/>
    </source>
</evidence>
<evidence type="ECO:0000255" key="4"/>
<evidence type="ECO:0000255" key="5">
    <source>
        <dbReference type="PROSITE-ProRule" id="PRU01103"/>
    </source>
</evidence>
<evidence type="ECO:0000255" key="6">
    <source>
        <dbReference type="RuleBase" id="RU000454"/>
    </source>
</evidence>
<evidence type="ECO:0000256" key="7">
    <source>
        <dbReference type="SAM" id="MobiDB-lite"/>
    </source>
</evidence>
<evidence type="ECO:0000269" key="8">
    <source>
    </source>
</evidence>
<evidence type="ECO:0000303" key="9">
    <source>
    </source>
</evidence>
<evidence type="ECO:0000305" key="10"/>
<evidence type="ECO:0000312" key="11">
    <source>
        <dbReference type="EMBL" id="KOB59201.1"/>
    </source>
</evidence>
<evidence type="ECO:0000312" key="12">
    <source>
        <dbReference type="Proteomes" id="UP000054289"/>
    </source>
</evidence>